<evidence type="ECO:0000250" key="1">
    <source>
        <dbReference type="UniProtKB" id="P27487"/>
    </source>
</evidence>
<evidence type="ECO:0000255" key="2"/>
<evidence type="ECO:0000255" key="3">
    <source>
        <dbReference type="PROSITE-ProRule" id="PRU10084"/>
    </source>
</evidence>
<evidence type="ECO:0000269" key="4">
    <source>
    </source>
</evidence>
<evidence type="ECO:0000305" key="5"/>
<protein>
    <recommendedName>
        <fullName>Venom dipeptidyl peptidase 4</fullName>
    </recommendedName>
    <alternativeName>
        <fullName>Allergen C</fullName>
    </alternativeName>
    <alternativeName>
        <fullName>Venom dipeptidyl peptidase IV</fullName>
        <ecNumber evidence="4">3.4.14.5</ecNumber>
    </alternativeName>
    <allergenName>Api m 5</allergenName>
</protein>
<name>VDPP4_APIME</name>
<reference key="1">
    <citation type="journal article" date="2010" name="J. Immunol.">
        <title>Identification, recombinant expression, and characterization of the 100 kDa high molecular weight hymenoptera venom allergens Api m 5 and Ves v 3.</title>
        <authorList>
            <person name="Blank S."/>
            <person name="Seismann H."/>
            <person name="Bockisch B."/>
            <person name="Braren I."/>
            <person name="Cifuentes L."/>
            <person name="McIntyre M."/>
            <person name="Ruhl D."/>
            <person name="Ring J."/>
            <person name="Bredehorst R."/>
            <person name="Ollert M.W."/>
            <person name="Grunwald T."/>
            <person name="Spillner E."/>
        </authorList>
    </citation>
    <scope>NUCLEOTIDE SEQUENCE [MRNA]</scope>
    <scope>PROTEIN SEQUENCE OF 50-63; 76-88; 178-193 AND 606-619</scope>
    <scope>IDENTIFICATION BY MASS SPECTROMETRY</scope>
    <scope>FUNCTION</scope>
    <scope>CATALYTIC ACTIVITY</scope>
    <scope>ACTIVITY REGULATION</scope>
    <scope>SUBCELLULAR LOCATION</scope>
    <scope>TISSUE SPECIFICITY</scope>
    <scope>ALLERGEN</scope>
    <source>
        <tissue>Venom</tissue>
        <tissue>Venom duct</tissue>
    </source>
</reference>
<reference key="2">
    <citation type="journal article" date="2006" name="Nature">
        <title>Insights into social insects from the genome of the honeybee Apis mellifera.</title>
        <authorList>
            <consortium name="Honeybee genome sequencing consortium"/>
        </authorList>
    </citation>
    <scope>NUCLEOTIDE SEQUENCE [LARGE SCALE GENOMIC DNA]</scope>
</reference>
<proteinExistence type="evidence at protein level"/>
<organism>
    <name type="scientific">Apis mellifera</name>
    <name type="common">Honeybee</name>
    <dbReference type="NCBI Taxonomy" id="7460"/>
    <lineage>
        <taxon>Eukaryota</taxon>
        <taxon>Metazoa</taxon>
        <taxon>Ecdysozoa</taxon>
        <taxon>Arthropoda</taxon>
        <taxon>Hexapoda</taxon>
        <taxon>Insecta</taxon>
        <taxon>Pterygota</taxon>
        <taxon>Neoptera</taxon>
        <taxon>Endopterygota</taxon>
        <taxon>Hymenoptera</taxon>
        <taxon>Apocrita</taxon>
        <taxon>Aculeata</taxon>
        <taxon>Apoidea</taxon>
        <taxon>Anthophila</taxon>
        <taxon>Apidae</taxon>
        <taxon>Apis</taxon>
    </lineage>
</organism>
<feature type="signal peptide" evidence="2">
    <location>
        <begin position="1"/>
        <end position="23"/>
    </location>
</feature>
<feature type="chain" id="PRO_5000336987" description="Venom dipeptidyl peptidase 4">
    <location>
        <begin position="24"/>
        <end position="775"/>
    </location>
</feature>
<feature type="active site" description="Charge relay system" evidence="3">
    <location>
        <position position="639"/>
    </location>
</feature>
<feature type="active site" description="Charge relay system" evidence="3">
    <location>
        <position position="718"/>
    </location>
</feature>
<feature type="active site" description="Charge relay system" evidence="3">
    <location>
        <position position="750"/>
    </location>
</feature>
<feature type="glycosylation site" description="N-linked (GlcNAc...) asparagine" evidence="2">
    <location>
        <position position="68"/>
    </location>
</feature>
<feature type="glycosylation site" description="N-linked (GlcNAc...) asparagine" evidence="2">
    <location>
        <position position="239"/>
    </location>
</feature>
<feature type="glycosylation site" description="N-linked (GlcNAc...) asparagine" evidence="2">
    <location>
        <position position="473"/>
    </location>
</feature>
<feature type="glycosylation site" description="N-linked (GlcNAc...) asparagine" evidence="2">
    <location>
        <position position="505"/>
    </location>
</feature>
<feature type="glycosylation site" description="N-linked (GlcNAc...) asparagine" evidence="2">
    <location>
        <position position="578"/>
    </location>
</feature>
<feature type="glycosylation site" description="N-linked (GlcNAc...) asparagine" evidence="2">
    <location>
        <position position="631"/>
    </location>
</feature>
<feature type="glycosylation site" description="N-linked (GlcNAc...) asparagine" evidence="2">
    <location>
        <position position="689"/>
    </location>
</feature>
<feature type="glycosylation site" description="N-linked (GlcNAc...) asparagine" evidence="2">
    <location>
        <position position="694"/>
    </location>
</feature>
<feature type="disulfide bond" evidence="1">
    <location>
        <begin position="450"/>
        <end position="453"/>
    </location>
</feature>
<feature type="disulfide bond" evidence="1">
    <location>
        <begin position="463"/>
        <end position="481"/>
    </location>
</feature>
<feature type="disulfide bond" evidence="1">
    <location>
        <begin position="659"/>
        <end position="770"/>
    </location>
</feature>
<dbReference type="EC" id="3.4.14.5" evidence="4"/>
<dbReference type="EMBL" id="EU564832">
    <property type="protein sequence ID" value="ACB70230.1"/>
    <property type="molecule type" value="mRNA"/>
</dbReference>
<dbReference type="RefSeq" id="NP_001119715.1">
    <property type="nucleotide sequence ID" value="NM_001126243.1"/>
</dbReference>
<dbReference type="SMR" id="B2D0J4"/>
<dbReference type="FunCoup" id="B2D0J4">
    <property type="interactions" value="83"/>
</dbReference>
<dbReference type="STRING" id="7460.B2D0J4"/>
<dbReference type="Allergome" id="5754">
    <property type="allergen name" value="Api m 5"/>
</dbReference>
<dbReference type="Allergome" id="5755">
    <property type="allergen name" value="Api m 5.0101"/>
</dbReference>
<dbReference type="ESTHER" id="apime-vdpp4">
    <property type="family name" value="DPP4N_Peptidase_S9"/>
</dbReference>
<dbReference type="PaxDb" id="7460-GB45028-PA"/>
<dbReference type="GeneID" id="410337"/>
<dbReference type="KEGG" id="ame:410337"/>
<dbReference type="eggNOG" id="KOG2100">
    <property type="taxonomic scope" value="Eukaryota"/>
</dbReference>
<dbReference type="InParanoid" id="B2D0J4"/>
<dbReference type="OrthoDB" id="16520at2759"/>
<dbReference type="PhylomeDB" id="B2D0J4"/>
<dbReference type="Proteomes" id="UP000005203">
    <property type="component" value="Linkage group LG11"/>
</dbReference>
<dbReference type="GO" id="GO:0005576">
    <property type="term" value="C:extracellular region"/>
    <property type="evidence" value="ECO:0007669"/>
    <property type="project" value="UniProtKB-SubCell"/>
</dbReference>
<dbReference type="GO" id="GO:0005886">
    <property type="term" value="C:plasma membrane"/>
    <property type="evidence" value="ECO:0007669"/>
    <property type="project" value="TreeGrafter"/>
</dbReference>
<dbReference type="GO" id="GO:0004177">
    <property type="term" value="F:aminopeptidase activity"/>
    <property type="evidence" value="ECO:0007669"/>
    <property type="project" value="UniProtKB-KW"/>
</dbReference>
<dbReference type="GO" id="GO:0008239">
    <property type="term" value="F:dipeptidyl-peptidase activity"/>
    <property type="evidence" value="ECO:0007669"/>
    <property type="project" value="UniProtKB-EC"/>
</dbReference>
<dbReference type="GO" id="GO:0008236">
    <property type="term" value="F:serine-type peptidase activity"/>
    <property type="evidence" value="ECO:0007669"/>
    <property type="project" value="InterPro"/>
</dbReference>
<dbReference type="GO" id="GO:0006508">
    <property type="term" value="P:proteolysis"/>
    <property type="evidence" value="ECO:0007669"/>
    <property type="project" value="UniProtKB-KW"/>
</dbReference>
<dbReference type="FunFam" id="3.40.50.1820:FF:000003">
    <property type="entry name" value="Dipeptidyl peptidase 4"/>
    <property type="match status" value="1"/>
</dbReference>
<dbReference type="Gene3D" id="3.40.50.1820">
    <property type="entry name" value="alpha/beta hydrolase"/>
    <property type="match status" value="1"/>
</dbReference>
<dbReference type="Gene3D" id="2.140.10.30">
    <property type="entry name" value="Dipeptidylpeptidase IV, N-terminal domain"/>
    <property type="match status" value="1"/>
</dbReference>
<dbReference type="InterPro" id="IPR029058">
    <property type="entry name" value="AB_hydrolase_fold"/>
</dbReference>
<dbReference type="InterPro" id="IPR001375">
    <property type="entry name" value="Peptidase_S9_cat"/>
</dbReference>
<dbReference type="InterPro" id="IPR002469">
    <property type="entry name" value="Peptidase_S9B_N"/>
</dbReference>
<dbReference type="InterPro" id="IPR050278">
    <property type="entry name" value="Serine_Prot_S9B/DPPIV"/>
</dbReference>
<dbReference type="PANTHER" id="PTHR11731">
    <property type="entry name" value="PROTEASE FAMILY S9B,C DIPEPTIDYL-PEPTIDASE IV-RELATED"/>
    <property type="match status" value="1"/>
</dbReference>
<dbReference type="PANTHER" id="PTHR11731:SF154">
    <property type="entry name" value="VENOM DIPEPTIDYL PEPTIDASE 4-LIKE PROTEIN"/>
    <property type="match status" value="1"/>
</dbReference>
<dbReference type="Pfam" id="PF00930">
    <property type="entry name" value="DPPIV_N"/>
    <property type="match status" value="1"/>
</dbReference>
<dbReference type="Pfam" id="PF00326">
    <property type="entry name" value="Peptidase_S9"/>
    <property type="match status" value="1"/>
</dbReference>
<dbReference type="SUPFAM" id="SSF53474">
    <property type="entry name" value="alpha/beta-Hydrolases"/>
    <property type="match status" value="1"/>
</dbReference>
<dbReference type="SUPFAM" id="SSF82171">
    <property type="entry name" value="DPP6 N-terminal domain-like"/>
    <property type="match status" value="1"/>
</dbReference>
<keyword id="KW-0020">Allergen</keyword>
<keyword id="KW-0031">Aminopeptidase</keyword>
<keyword id="KW-0903">Direct protein sequencing</keyword>
<keyword id="KW-1015">Disulfide bond</keyword>
<keyword id="KW-0325">Glycoprotein</keyword>
<keyword id="KW-0378">Hydrolase</keyword>
<keyword id="KW-0645">Protease</keyword>
<keyword id="KW-1185">Reference proteome</keyword>
<keyword id="KW-0964">Secreted</keyword>
<keyword id="KW-0732">Signal</keyword>
<sequence length="775" mass="87937">MEVLVQLALLLVVHGSLVVLVAGKSVPRVIDQDLERYEPLEEEDHRGARVPFNLEETYDQSFRANSFNGTWKTDREILYSDNYVGDIRLFDVTTGSGTVLLDSSVTADFDKASVMFSFDNSHVAIGHDYVNGFRYSIHQKCTVYNIKSRTFTDIANGDRIPLFKWSPTRNALIYVHKNDIYYQVFFEGGSDTRRITNTGVPDIVFNGIPDWVYEEEVLGSPVAFWISPDGRHLAFATFNDTNVRDIVISKYGSPGNSRDQYPNEIRIKYPKAGTTNPFVSLSVIDLHDPSSKLIDLPPPVDVVGADNVLYTANWRRDGEIVATWTNRVQNKAQLVLYDTKGNANNIYYEEETEGWLRIQPPLYHDRYVIVAKLQDSGTKAGRFLHATRLEYRNGALVDETDLTPGTCEVISLLLVDHARARLYYLGTELGKPSHKNLYSVQLSGNEPPVCLSCDVLTPEGNRCTYAYAYFSTNGSHYALYCAGPDPVFIAIVNANHRQISIWEENRSLRRKLAARTQPIVKNFNVNANGYTNKVKLYLPPDFDETKKYPLLITVYAGPNTIRITEEATYGFESYIVTNRSVIYGRIDGRGSAYKGSKMLFEIYRRLGTVEIEDQIIITRTLQEKYSWIDSNRTGIWGWSYGGFSAAMVLATDAESVFKCGISVAPVTSWIYYDSLYTERFMGLPTPEDNQSGYNDTDVSRRVEGMRGKKYMLIHGTADDNVHYQQTMMLNKALVNSDIMFQQQTYTDEAHALGNVFPHLYHTTDRFWANCLGYSH</sequence>
<comment type="function">
    <text evidence="4">Venom dipeptidyl-peptidase which removes N-terminal dipeptides sequentially from polypeptides having unsubstituted N-termini provided that the penultimate residue is proline. May process promelittin into its active form and/or modulate the chemotactic activity of immune cells after the insect sting.</text>
</comment>
<comment type="catalytic activity">
    <reaction evidence="4">
        <text>Release of an N-terminal dipeptide, Xaa-Yaa-|-Zaa-, from a polypeptide, preferentially when Yaa is Pro, provided Zaa is neither Pro nor hydroxyproline.</text>
        <dbReference type="EC" id="3.4.14.5"/>
    </reaction>
</comment>
<comment type="activity regulation">
    <text evidence="4">Inhibited by diprotin A.</text>
</comment>
<comment type="subcellular location">
    <subcellularLocation>
        <location evidence="4">Secreted</location>
    </subcellularLocation>
</comment>
<comment type="tissue specificity">
    <text evidence="4">Expressed by the venom duct.</text>
</comment>
<comment type="allergen">
    <text evidence="4">Causes an allergic reaction in human.</text>
</comment>
<comment type="similarity">
    <text evidence="5">Belongs to the peptidase S9B family. DPPIV subfamily.</text>
</comment>
<accession>B2D0J4</accession>